<gene>
    <name evidence="1" type="primary">aroQ</name>
    <name type="ordered locus">tlr0494</name>
</gene>
<name>AROQ_THEVB</name>
<sequence>MASHILVLHGPNLNLLGQREPGIYGTVTLASINQSLEALAQELGVTIECLQSNHEGVLVDAIQGALGRAQGILINPAAYTHTSVALRDAIAAVALPTVEVHLSNIHQREAFRHHSYIAPVAIGQIAGFGADSYLLGLRALVNYLQQKANS</sequence>
<keyword id="KW-0028">Amino-acid biosynthesis</keyword>
<keyword id="KW-0057">Aromatic amino acid biosynthesis</keyword>
<keyword id="KW-0456">Lyase</keyword>
<keyword id="KW-1185">Reference proteome</keyword>
<proteinExistence type="inferred from homology"/>
<comment type="function">
    <text evidence="1">Catalyzes a trans-dehydration via an enolate intermediate.</text>
</comment>
<comment type="catalytic activity">
    <reaction evidence="1">
        <text>3-dehydroquinate = 3-dehydroshikimate + H2O</text>
        <dbReference type="Rhea" id="RHEA:21096"/>
        <dbReference type="ChEBI" id="CHEBI:15377"/>
        <dbReference type="ChEBI" id="CHEBI:16630"/>
        <dbReference type="ChEBI" id="CHEBI:32364"/>
        <dbReference type="EC" id="4.2.1.10"/>
    </reaction>
</comment>
<comment type="pathway">
    <text evidence="1">Metabolic intermediate biosynthesis; chorismate biosynthesis; chorismate from D-erythrose 4-phosphate and phosphoenolpyruvate: step 3/7.</text>
</comment>
<comment type="subunit">
    <text evidence="1">Homododecamer.</text>
</comment>
<comment type="similarity">
    <text evidence="1">Belongs to the type-II 3-dehydroquinase family.</text>
</comment>
<comment type="sequence caution" evidence="2">
    <conflict type="erroneous initiation">
        <sequence resource="EMBL-CDS" id="BAC08046"/>
    </conflict>
</comment>
<organism>
    <name type="scientific">Thermosynechococcus vestitus (strain NIES-2133 / IAM M-273 / BP-1)</name>
    <dbReference type="NCBI Taxonomy" id="197221"/>
    <lineage>
        <taxon>Bacteria</taxon>
        <taxon>Bacillati</taxon>
        <taxon>Cyanobacteriota</taxon>
        <taxon>Cyanophyceae</taxon>
        <taxon>Acaryochloridales</taxon>
        <taxon>Thermosynechococcaceae</taxon>
        <taxon>Thermosynechococcus</taxon>
    </lineage>
</organism>
<protein>
    <recommendedName>
        <fullName evidence="1">3-dehydroquinate dehydratase</fullName>
        <shortName evidence="1">3-dehydroquinase</shortName>
        <ecNumber evidence="1">4.2.1.10</ecNumber>
    </recommendedName>
    <alternativeName>
        <fullName evidence="1">Type II DHQase</fullName>
    </alternativeName>
</protein>
<evidence type="ECO:0000255" key="1">
    <source>
        <dbReference type="HAMAP-Rule" id="MF_00169"/>
    </source>
</evidence>
<evidence type="ECO:0000305" key="2"/>
<reference key="1">
    <citation type="journal article" date="2002" name="DNA Res.">
        <title>Complete genome structure of the thermophilic cyanobacterium Thermosynechococcus elongatus BP-1.</title>
        <authorList>
            <person name="Nakamura Y."/>
            <person name="Kaneko T."/>
            <person name="Sato S."/>
            <person name="Ikeuchi M."/>
            <person name="Katoh H."/>
            <person name="Sasamoto S."/>
            <person name="Watanabe A."/>
            <person name="Iriguchi M."/>
            <person name="Kawashima K."/>
            <person name="Kimura T."/>
            <person name="Kishida Y."/>
            <person name="Kiyokawa C."/>
            <person name="Kohara M."/>
            <person name="Matsumoto M."/>
            <person name="Matsuno A."/>
            <person name="Nakazaki N."/>
            <person name="Shimpo S."/>
            <person name="Sugimoto M."/>
            <person name="Takeuchi C."/>
            <person name="Yamada M."/>
            <person name="Tabata S."/>
        </authorList>
    </citation>
    <scope>NUCLEOTIDE SEQUENCE [LARGE SCALE GENOMIC DNA]</scope>
    <source>
        <strain>NIES-2133 / IAM M-273 / BP-1</strain>
    </source>
</reference>
<dbReference type="EC" id="4.2.1.10" evidence="1"/>
<dbReference type="EMBL" id="BA000039">
    <property type="protein sequence ID" value="BAC08046.1"/>
    <property type="status" value="ALT_INIT"/>
    <property type="molecule type" value="Genomic_DNA"/>
</dbReference>
<dbReference type="RefSeq" id="NP_681284.1">
    <property type="nucleotide sequence ID" value="NC_004113.1"/>
</dbReference>
<dbReference type="RefSeq" id="WP_164920703.1">
    <property type="nucleotide sequence ID" value="NC_004113.1"/>
</dbReference>
<dbReference type="SMR" id="Q8DLJ7"/>
<dbReference type="STRING" id="197221.gene:10747083"/>
<dbReference type="EnsemblBacteria" id="BAC08046">
    <property type="protein sequence ID" value="BAC08046"/>
    <property type="gene ID" value="BAC08046"/>
</dbReference>
<dbReference type="KEGG" id="tel:tlr0494"/>
<dbReference type="PATRIC" id="fig|197221.4.peg.520"/>
<dbReference type="eggNOG" id="COG0757">
    <property type="taxonomic scope" value="Bacteria"/>
</dbReference>
<dbReference type="UniPathway" id="UPA00053">
    <property type="reaction ID" value="UER00086"/>
</dbReference>
<dbReference type="Proteomes" id="UP000000440">
    <property type="component" value="Chromosome"/>
</dbReference>
<dbReference type="GO" id="GO:0003855">
    <property type="term" value="F:3-dehydroquinate dehydratase activity"/>
    <property type="evidence" value="ECO:0007669"/>
    <property type="project" value="UniProtKB-UniRule"/>
</dbReference>
<dbReference type="GO" id="GO:0008652">
    <property type="term" value="P:amino acid biosynthetic process"/>
    <property type="evidence" value="ECO:0007669"/>
    <property type="project" value="UniProtKB-KW"/>
</dbReference>
<dbReference type="GO" id="GO:0009073">
    <property type="term" value="P:aromatic amino acid family biosynthetic process"/>
    <property type="evidence" value="ECO:0007669"/>
    <property type="project" value="UniProtKB-KW"/>
</dbReference>
<dbReference type="GO" id="GO:0009423">
    <property type="term" value="P:chorismate biosynthetic process"/>
    <property type="evidence" value="ECO:0007669"/>
    <property type="project" value="UniProtKB-UniRule"/>
</dbReference>
<dbReference type="GO" id="GO:0019631">
    <property type="term" value="P:quinate catabolic process"/>
    <property type="evidence" value="ECO:0007669"/>
    <property type="project" value="TreeGrafter"/>
</dbReference>
<dbReference type="CDD" id="cd00466">
    <property type="entry name" value="DHQase_II"/>
    <property type="match status" value="1"/>
</dbReference>
<dbReference type="Gene3D" id="3.40.50.9100">
    <property type="entry name" value="Dehydroquinase, class II"/>
    <property type="match status" value="1"/>
</dbReference>
<dbReference type="HAMAP" id="MF_00169">
    <property type="entry name" value="AroQ"/>
    <property type="match status" value="1"/>
</dbReference>
<dbReference type="InterPro" id="IPR001874">
    <property type="entry name" value="DHquinase_II"/>
</dbReference>
<dbReference type="InterPro" id="IPR018509">
    <property type="entry name" value="DHquinase_II_CS"/>
</dbReference>
<dbReference type="InterPro" id="IPR036441">
    <property type="entry name" value="DHquinase_II_sf"/>
</dbReference>
<dbReference type="NCBIfam" id="TIGR01088">
    <property type="entry name" value="aroQ"/>
    <property type="match status" value="1"/>
</dbReference>
<dbReference type="NCBIfam" id="NF003804">
    <property type="entry name" value="PRK05395.1-1"/>
    <property type="match status" value="1"/>
</dbReference>
<dbReference type="NCBIfam" id="NF003805">
    <property type="entry name" value="PRK05395.1-2"/>
    <property type="match status" value="1"/>
</dbReference>
<dbReference type="NCBIfam" id="NF003806">
    <property type="entry name" value="PRK05395.1-3"/>
    <property type="match status" value="1"/>
</dbReference>
<dbReference type="NCBIfam" id="NF003807">
    <property type="entry name" value="PRK05395.1-4"/>
    <property type="match status" value="1"/>
</dbReference>
<dbReference type="PANTHER" id="PTHR21272">
    <property type="entry name" value="CATABOLIC 3-DEHYDROQUINASE"/>
    <property type="match status" value="1"/>
</dbReference>
<dbReference type="PANTHER" id="PTHR21272:SF3">
    <property type="entry name" value="CATABOLIC 3-DEHYDROQUINASE"/>
    <property type="match status" value="1"/>
</dbReference>
<dbReference type="Pfam" id="PF01220">
    <property type="entry name" value="DHquinase_II"/>
    <property type="match status" value="1"/>
</dbReference>
<dbReference type="PIRSF" id="PIRSF001399">
    <property type="entry name" value="DHquinase_II"/>
    <property type="match status" value="1"/>
</dbReference>
<dbReference type="SUPFAM" id="SSF52304">
    <property type="entry name" value="Type II 3-dehydroquinate dehydratase"/>
    <property type="match status" value="1"/>
</dbReference>
<dbReference type="PROSITE" id="PS01029">
    <property type="entry name" value="DEHYDROQUINASE_II"/>
    <property type="match status" value="1"/>
</dbReference>
<accession>Q8DLJ7</accession>
<feature type="chain" id="PRO_0000159931" description="3-dehydroquinate dehydratase">
    <location>
        <begin position="1"/>
        <end position="150"/>
    </location>
</feature>
<feature type="active site" description="Proton acceptor" evidence="1">
    <location>
        <position position="24"/>
    </location>
</feature>
<feature type="active site" description="Proton donor" evidence="1">
    <location>
        <position position="101"/>
    </location>
</feature>
<feature type="binding site" evidence="1">
    <location>
        <position position="75"/>
    </location>
    <ligand>
        <name>substrate</name>
    </ligand>
</feature>
<feature type="binding site" evidence="1">
    <location>
        <position position="81"/>
    </location>
    <ligand>
        <name>substrate</name>
    </ligand>
</feature>
<feature type="binding site" evidence="1">
    <location>
        <position position="88"/>
    </location>
    <ligand>
        <name>substrate</name>
    </ligand>
</feature>
<feature type="binding site" evidence="1">
    <location>
        <begin position="102"/>
        <end position="103"/>
    </location>
    <ligand>
        <name>substrate</name>
    </ligand>
</feature>
<feature type="binding site" evidence="1">
    <location>
        <position position="112"/>
    </location>
    <ligand>
        <name>substrate</name>
    </ligand>
</feature>
<feature type="site" description="Transition state stabilizer" evidence="1">
    <location>
        <position position="19"/>
    </location>
</feature>